<protein>
    <recommendedName>
        <fullName evidence="1">DNA ligase</fullName>
        <ecNumber evidence="1">6.5.1.1</ecNumber>
    </recommendedName>
    <alternativeName>
        <fullName evidence="1">Polydeoxyribonucleotide synthase [ATP]</fullName>
    </alternativeName>
</protein>
<accession>A6VFQ9</accession>
<organism>
    <name type="scientific">Methanococcus maripaludis (strain C7 / ATCC BAA-1331)</name>
    <dbReference type="NCBI Taxonomy" id="426368"/>
    <lineage>
        <taxon>Archaea</taxon>
        <taxon>Methanobacteriati</taxon>
        <taxon>Methanobacteriota</taxon>
        <taxon>Methanomada group</taxon>
        <taxon>Methanococci</taxon>
        <taxon>Methanococcales</taxon>
        <taxon>Methanococcaceae</taxon>
        <taxon>Methanococcus</taxon>
    </lineage>
</organism>
<sequence>MLFIDFCKILDKIEKTTKRLEKTDYFVELIDFIKTNGKPENLKQVSQITIGRVFAEFENKEIGIGPNLLLEAVKTTGISEKDLKSKIKETGDIGIAVENLSSNIKQVSLFSQALTLEEVYSTLKKLSEIEGNSSQKKKTRIISNLLILATPVESRYISRLILEDMRIGMNIPTILASFSNYFNINKETVEKIYAVTNDIGLLGEKLISGSNIENDSELQLKVFRPIKPMLAQLTPSIEAAIIETKMPQFETKYDGARVQVHKSDGNVKIYSRRLENITNSVPELVEEIKKIDIDNIILEGECVAMDLSSGKPRPFQDILRRFRRKYDIDKMAEKIALRIYFFDVLYYEKGLIDTPLKDRREILEKLFGTNNWDTELSKIEKEIFSNKMLFSSFKLNSDDPILAKEFFNWSLSIGHEGIMIKNPDAPYTPGSRVKTMYKVKPTLENLDVVVTRAKIGMGKRKDWYGSYEISVKDYEDNLHVIGNVGTGLTEDDLEKLTKIVNEIKIEDLGEEVILEPKIVLEVTYEEIQTSEKYEMGYALRFPRVVQIREDKSINDINTLDDVKKIYEIERNRK</sequence>
<gene>
    <name evidence="1" type="primary">lig</name>
    <name type="ordered locus">MmarC7_0215</name>
</gene>
<comment type="function">
    <text evidence="1">DNA ligase that seals nicks in double-stranded DNA during DNA replication, DNA recombination and DNA repair.</text>
</comment>
<comment type="catalytic activity">
    <reaction evidence="1">
        <text>ATP + (deoxyribonucleotide)n-3'-hydroxyl + 5'-phospho-(deoxyribonucleotide)m = (deoxyribonucleotide)n+m + AMP + diphosphate.</text>
        <dbReference type="EC" id="6.5.1.1"/>
    </reaction>
</comment>
<comment type="cofactor">
    <cofactor evidence="1">
        <name>Mg(2+)</name>
        <dbReference type="ChEBI" id="CHEBI:18420"/>
    </cofactor>
</comment>
<comment type="similarity">
    <text evidence="1">Belongs to the ATP-dependent DNA ligase family.</text>
</comment>
<name>DNLI_METM7</name>
<feature type="chain" id="PRO_1000049871" description="DNA ligase">
    <location>
        <begin position="1"/>
        <end position="573"/>
    </location>
</feature>
<feature type="active site" description="N6-AMP-lysine intermediate" evidence="1">
    <location>
        <position position="252"/>
    </location>
</feature>
<feature type="binding site" evidence="1">
    <location>
        <position position="250"/>
    </location>
    <ligand>
        <name>ATP</name>
        <dbReference type="ChEBI" id="CHEBI:30616"/>
    </ligand>
</feature>
<feature type="binding site" evidence="1">
    <location>
        <position position="257"/>
    </location>
    <ligand>
        <name>ATP</name>
        <dbReference type="ChEBI" id="CHEBI:30616"/>
    </ligand>
</feature>
<feature type="binding site" evidence="1">
    <location>
        <position position="272"/>
    </location>
    <ligand>
        <name>ATP</name>
        <dbReference type="ChEBI" id="CHEBI:30616"/>
    </ligand>
</feature>
<feature type="binding site" evidence="1">
    <location>
        <position position="301"/>
    </location>
    <ligand>
        <name>ATP</name>
        <dbReference type="ChEBI" id="CHEBI:30616"/>
    </ligand>
</feature>
<feature type="binding site" evidence="1">
    <location>
        <position position="342"/>
    </location>
    <ligand>
        <name>ATP</name>
        <dbReference type="ChEBI" id="CHEBI:30616"/>
    </ligand>
</feature>
<feature type="binding site" evidence="1">
    <location>
        <position position="432"/>
    </location>
    <ligand>
        <name>ATP</name>
        <dbReference type="ChEBI" id="CHEBI:30616"/>
    </ligand>
</feature>
<feature type="binding site" evidence="1">
    <location>
        <position position="438"/>
    </location>
    <ligand>
        <name>ATP</name>
        <dbReference type="ChEBI" id="CHEBI:30616"/>
    </ligand>
</feature>
<proteinExistence type="inferred from homology"/>
<reference key="1">
    <citation type="submission" date="2007-06" db="EMBL/GenBank/DDBJ databases">
        <title>Complete sequence of Methanococcus maripaludis C7.</title>
        <authorList>
            <consortium name="US DOE Joint Genome Institute"/>
            <person name="Copeland A."/>
            <person name="Lucas S."/>
            <person name="Lapidus A."/>
            <person name="Barry K."/>
            <person name="Glavina del Rio T."/>
            <person name="Dalin E."/>
            <person name="Tice H."/>
            <person name="Pitluck S."/>
            <person name="Clum A."/>
            <person name="Schmutz J."/>
            <person name="Larimer F."/>
            <person name="Land M."/>
            <person name="Hauser L."/>
            <person name="Kyrpides N."/>
            <person name="Anderson I."/>
            <person name="Sieprawska-Lupa M."/>
            <person name="Whitman W.B."/>
            <person name="Richardson P."/>
        </authorList>
    </citation>
    <scope>NUCLEOTIDE SEQUENCE [LARGE SCALE GENOMIC DNA]</scope>
    <source>
        <strain>C7 / ATCC BAA-1331</strain>
    </source>
</reference>
<dbReference type="EC" id="6.5.1.1" evidence="1"/>
<dbReference type="EMBL" id="CP000745">
    <property type="protein sequence ID" value="ABR65285.1"/>
    <property type="molecule type" value="Genomic_DNA"/>
</dbReference>
<dbReference type="SMR" id="A6VFQ9"/>
<dbReference type="STRING" id="426368.MmarC7_0215"/>
<dbReference type="KEGG" id="mmz:MmarC7_0215"/>
<dbReference type="eggNOG" id="arCOG01347">
    <property type="taxonomic scope" value="Archaea"/>
</dbReference>
<dbReference type="HOGENOM" id="CLU_005138_6_0_2"/>
<dbReference type="OrthoDB" id="31274at2157"/>
<dbReference type="GO" id="GO:0005524">
    <property type="term" value="F:ATP binding"/>
    <property type="evidence" value="ECO:0007669"/>
    <property type="project" value="UniProtKB-UniRule"/>
</dbReference>
<dbReference type="GO" id="GO:0003677">
    <property type="term" value="F:DNA binding"/>
    <property type="evidence" value="ECO:0007669"/>
    <property type="project" value="InterPro"/>
</dbReference>
<dbReference type="GO" id="GO:0003910">
    <property type="term" value="F:DNA ligase (ATP) activity"/>
    <property type="evidence" value="ECO:0007669"/>
    <property type="project" value="UniProtKB-UniRule"/>
</dbReference>
<dbReference type="GO" id="GO:0046872">
    <property type="term" value="F:metal ion binding"/>
    <property type="evidence" value="ECO:0007669"/>
    <property type="project" value="UniProtKB-KW"/>
</dbReference>
<dbReference type="GO" id="GO:0051301">
    <property type="term" value="P:cell division"/>
    <property type="evidence" value="ECO:0007669"/>
    <property type="project" value="UniProtKB-KW"/>
</dbReference>
<dbReference type="GO" id="GO:0071897">
    <property type="term" value="P:DNA biosynthetic process"/>
    <property type="evidence" value="ECO:0007669"/>
    <property type="project" value="InterPro"/>
</dbReference>
<dbReference type="GO" id="GO:0006310">
    <property type="term" value="P:DNA recombination"/>
    <property type="evidence" value="ECO:0007669"/>
    <property type="project" value="UniProtKB-UniRule"/>
</dbReference>
<dbReference type="GO" id="GO:0006281">
    <property type="term" value="P:DNA repair"/>
    <property type="evidence" value="ECO:0007669"/>
    <property type="project" value="UniProtKB-UniRule"/>
</dbReference>
<dbReference type="GO" id="GO:0006273">
    <property type="term" value="P:lagging strand elongation"/>
    <property type="evidence" value="ECO:0007669"/>
    <property type="project" value="TreeGrafter"/>
</dbReference>
<dbReference type="CDD" id="cd07901">
    <property type="entry name" value="Adenylation_DNA_ligase_Arch_LigB"/>
    <property type="match status" value="1"/>
</dbReference>
<dbReference type="FunFam" id="1.10.3260.10:FF:000007">
    <property type="entry name" value="DNA ligase"/>
    <property type="match status" value="1"/>
</dbReference>
<dbReference type="Gene3D" id="1.10.3260.10">
    <property type="entry name" value="DNA ligase, ATP-dependent, N-terminal domain"/>
    <property type="match status" value="1"/>
</dbReference>
<dbReference type="Gene3D" id="3.30.470.30">
    <property type="entry name" value="DNA ligase/mRNA capping enzyme"/>
    <property type="match status" value="1"/>
</dbReference>
<dbReference type="Gene3D" id="2.40.50.140">
    <property type="entry name" value="Nucleic acid-binding proteins"/>
    <property type="match status" value="1"/>
</dbReference>
<dbReference type="HAMAP" id="MF_00407">
    <property type="entry name" value="DNA_ligase"/>
    <property type="match status" value="1"/>
</dbReference>
<dbReference type="InterPro" id="IPR050191">
    <property type="entry name" value="ATP-dep_DNA_ligase"/>
</dbReference>
<dbReference type="InterPro" id="IPR022865">
    <property type="entry name" value="DNA_ligae_ATP-dep_bac/arc"/>
</dbReference>
<dbReference type="InterPro" id="IPR000977">
    <property type="entry name" value="DNA_ligase_ATP-dep"/>
</dbReference>
<dbReference type="InterPro" id="IPR012309">
    <property type="entry name" value="DNA_ligase_ATP-dep_C"/>
</dbReference>
<dbReference type="InterPro" id="IPR012310">
    <property type="entry name" value="DNA_ligase_ATP-dep_cent"/>
</dbReference>
<dbReference type="InterPro" id="IPR016059">
    <property type="entry name" value="DNA_ligase_ATP-dep_CS"/>
</dbReference>
<dbReference type="InterPro" id="IPR012308">
    <property type="entry name" value="DNA_ligase_ATP-dep_N"/>
</dbReference>
<dbReference type="InterPro" id="IPR036599">
    <property type="entry name" value="DNA_ligase_N_sf"/>
</dbReference>
<dbReference type="InterPro" id="IPR012340">
    <property type="entry name" value="NA-bd_OB-fold"/>
</dbReference>
<dbReference type="NCBIfam" id="TIGR00574">
    <property type="entry name" value="dnl1"/>
    <property type="match status" value="1"/>
</dbReference>
<dbReference type="PANTHER" id="PTHR45674:SF7">
    <property type="entry name" value="DNA LIGASE"/>
    <property type="match status" value="1"/>
</dbReference>
<dbReference type="PANTHER" id="PTHR45674">
    <property type="entry name" value="DNA LIGASE 1/3 FAMILY MEMBER"/>
    <property type="match status" value="1"/>
</dbReference>
<dbReference type="Pfam" id="PF04679">
    <property type="entry name" value="DNA_ligase_A_C"/>
    <property type="match status" value="1"/>
</dbReference>
<dbReference type="Pfam" id="PF01068">
    <property type="entry name" value="DNA_ligase_A_M"/>
    <property type="match status" value="1"/>
</dbReference>
<dbReference type="Pfam" id="PF04675">
    <property type="entry name" value="DNA_ligase_A_N"/>
    <property type="match status" value="1"/>
</dbReference>
<dbReference type="SUPFAM" id="SSF117018">
    <property type="entry name" value="ATP-dependent DNA ligase DNA-binding domain"/>
    <property type="match status" value="1"/>
</dbReference>
<dbReference type="SUPFAM" id="SSF56091">
    <property type="entry name" value="DNA ligase/mRNA capping enzyme, catalytic domain"/>
    <property type="match status" value="1"/>
</dbReference>
<dbReference type="SUPFAM" id="SSF50249">
    <property type="entry name" value="Nucleic acid-binding proteins"/>
    <property type="match status" value="1"/>
</dbReference>
<dbReference type="PROSITE" id="PS00697">
    <property type="entry name" value="DNA_LIGASE_A1"/>
    <property type="match status" value="1"/>
</dbReference>
<dbReference type="PROSITE" id="PS00333">
    <property type="entry name" value="DNA_LIGASE_A2"/>
    <property type="match status" value="1"/>
</dbReference>
<dbReference type="PROSITE" id="PS50160">
    <property type="entry name" value="DNA_LIGASE_A3"/>
    <property type="match status" value="1"/>
</dbReference>
<evidence type="ECO:0000255" key="1">
    <source>
        <dbReference type="HAMAP-Rule" id="MF_00407"/>
    </source>
</evidence>
<keyword id="KW-0067">ATP-binding</keyword>
<keyword id="KW-0131">Cell cycle</keyword>
<keyword id="KW-0132">Cell division</keyword>
<keyword id="KW-0227">DNA damage</keyword>
<keyword id="KW-0233">DNA recombination</keyword>
<keyword id="KW-0234">DNA repair</keyword>
<keyword id="KW-0235">DNA replication</keyword>
<keyword id="KW-0436">Ligase</keyword>
<keyword id="KW-0460">Magnesium</keyword>
<keyword id="KW-0479">Metal-binding</keyword>
<keyword id="KW-0547">Nucleotide-binding</keyword>